<evidence type="ECO:0000250" key="1">
    <source>
        <dbReference type="UniProtKB" id="P23301"/>
    </source>
</evidence>
<evidence type="ECO:0000269" key="2">
    <source>
    </source>
</evidence>
<evidence type="ECO:0000305" key="3"/>
<feature type="chain" id="PRO_0000142458" description="Eukaryotic translation initiation factor 5A">
    <location>
        <begin position="1"/>
        <end position="159"/>
    </location>
</feature>
<feature type="modified residue" description="Hypusine" evidence="2">
    <location>
        <position position="55"/>
    </location>
</feature>
<accession>P13651</accession>
<accession>Q54NT9</accession>
<reference key="1">
    <citation type="journal article" date="1989" name="FEBS Lett.">
        <title>cDNA and derived amino acid sequence of the hypusine containing protein from Dictyostelium discoideum.</title>
        <authorList>
            <person name="Sandholzer U."/>
            <person name="Centea-Intemann M."/>
            <person name="Noegel A.A."/>
            <person name="Lottspeich F."/>
        </authorList>
    </citation>
    <scope>NUCLEOTIDE SEQUENCE [MRNA]</scope>
    <scope>PROTEIN SEQUENCE OF 33-39; 53-72 AND 93-140</scope>
    <scope>HYPUSINE AT LYS-55</scope>
    <source>
        <strain>AX3</strain>
    </source>
</reference>
<reference key="2">
    <citation type="submission" date="1989-10" db="EMBL/GenBank/DDBJ databases">
        <authorList>
            <person name="Lottspeich F."/>
        </authorList>
    </citation>
    <scope>SEQUENCE REVISION TO 12-16</scope>
</reference>
<reference key="3">
    <citation type="journal article" date="2005" name="Nature">
        <title>The genome of the social amoeba Dictyostelium discoideum.</title>
        <authorList>
            <person name="Eichinger L."/>
            <person name="Pachebat J.A."/>
            <person name="Gloeckner G."/>
            <person name="Rajandream M.A."/>
            <person name="Sucgang R."/>
            <person name="Berriman M."/>
            <person name="Song J."/>
            <person name="Olsen R."/>
            <person name="Szafranski K."/>
            <person name="Xu Q."/>
            <person name="Tunggal B."/>
            <person name="Kummerfeld S."/>
            <person name="Madera M."/>
            <person name="Konfortov B.A."/>
            <person name="Rivero F."/>
            <person name="Bankier A.T."/>
            <person name="Lehmann R."/>
            <person name="Hamlin N."/>
            <person name="Davies R."/>
            <person name="Gaudet P."/>
            <person name="Fey P."/>
            <person name="Pilcher K."/>
            <person name="Chen G."/>
            <person name="Saunders D."/>
            <person name="Sodergren E.J."/>
            <person name="Davis P."/>
            <person name="Kerhornou A."/>
            <person name="Nie X."/>
            <person name="Hall N."/>
            <person name="Anjard C."/>
            <person name="Hemphill L."/>
            <person name="Bason N."/>
            <person name="Farbrother P."/>
            <person name="Desany B."/>
            <person name="Just E."/>
            <person name="Morio T."/>
            <person name="Rost R."/>
            <person name="Churcher C.M."/>
            <person name="Cooper J."/>
            <person name="Haydock S."/>
            <person name="van Driessche N."/>
            <person name="Cronin A."/>
            <person name="Goodhead I."/>
            <person name="Muzny D.M."/>
            <person name="Mourier T."/>
            <person name="Pain A."/>
            <person name="Lu M."/>
            <person name="Harper D."/>
            <person name="Lindsay R."/>
            <person name="Hauser H."/>
            <person name="James K.D."/>
            <person name="Quiles M."/>
            <person name="Madan Babu M."/>
            <person name="Saito T."/>
            <person name="Buchrieser C."/>
            <person name="Wardroper A."/>
            <person name="Felder M."/>
            <person name="Thangavelu M."/>
            <person name="Johnson D."/>
            <person name="Knights A."/>
            <person name="Loulseged H."/>
            <person name="Mungall K.L."/>
            <person name="Oliver K."/>
            <person name="Price C."/>
            <person name="Quail M.A."/>
            <person name="Urushihara H."/>
            <person name="Hernandez J."/>
            <person name="Rabbinowitsch E."/>
            <person name="Steffen D."/>
            <person name="Sanders M."/>
            <person name="Ma J."/>
            <person name="Kohara Y."/>
            <person name="Sharp S."/>
            <person name="Simmonds M.N."/>
            <person name="Spiegler S."/>
            <person name="Tivey A."/>
            <person name="Sugano S."/>
            <person name="White B."/>
            <person name="Walker D."/>
            <person name="Woodward J.R."/>
            <person name="Winckler T."/>
            <person name="Tanaka Y."/>
            <person name="Shaulsky G."/>
            <person name="Schleicher M."/>
            <person name="Weinstock G.M."/>
            <person name="Rosenthal A."/>
            <person name="Cox E.C."/>
            <person name="Chisholm R.L."/>
            <person name="Gibbs R.A."/>
            <person name="Loomis W.F."/>
            <person name="Platzer M."/>
            <person name="Kay R.R."/>
            <person name="Williams J.G."/>
            <person name="Dear P.H."/>
            <person name="Noegel A.A."/>
            <person name="Barrell B.G."/>
            <person name="Kuspa A."/>
        </authorList>
    </citation>
    <scope>NUCLEOTIDE SEQUENCE [LARGE SCALE GENOMIC DNA]</scope>
    <source>
        <strain>AX4</strain>
    </source>
</reference>
<sequence length="159" mass="17090">MSDNEALDVEDYAQAGSGASLTFPIQCSALRKNGFVVIKGFPCKIVDMSTSKTGKHGHAKVNITAIDIFTGKKYEEICPSTHNIDVPNVSRKEYTVMDVQDGYLSLLDAGGEVKEDLALPEDDIGKEITQMLKEGKEPLVSVISALGKEGVVSVKVSNN</sequence>
<name>IF5A_DICDI</name>
<proteinExistence type="evidence at protein level"/>
<gene>
    <name type="primary">eif5a</name>
    <name type="synonym">eifE</name>
    <name type="ORF">DDB_G0284861</name>
</gene>
<protein>
    <recommendedName>
        <fullName>Eukaryotic translation initiation factor 5A</fullName>
        <shortName>eIF-5A</shortName>
    </recommendedName>
    <alternativeName>
        <fullName>eIF-4D</fullName>
    </alternativeName>
</protein>
<comment type="function">
    <text evidence="1">Translation factor that promotes translation elongation and termination, particularly upon ribosome stalling at specific amino acid sequence contexts (By similarity). Binds between the exit (E) and peptidyl (P) site of the ribosome and promotes rescue of stalled ribosome: specifically required for efficient translation of polyproline-containing peptides as well as other motifs that stall the ribosome (By similarity). Acts as a ribosome quality control (RQC) cofactor by joining the RQC complex to facilitate peptidyl transfer during CAT tailing step (By similarity).</text>
</comment>
<comment type="subcellular location">
    <subcellularLocation>
        <location evidence="1">Cytoplasm</location>
    </subcellularLocation>
</comment>
<comment type="PTM">
    <text evidence="2">Lys-55 undergoes hypusination, a unique post-translational modification that consists in the addition of a butylamino group from spermidine to lysine side chain, leading to the formation of the unusual amino acid hypusine. eIF-5As are the only known proteins to undergo this modification, which is essential for their function.</text>
</comment>
<comment type="similarity">
    <text evidence="3">Belongs to the eIF-5A family.</text>
</comment>
<comment type="sequence caution" evidence="3">
    <conflict type="erroneous initiation">
        <sequence resource="EMBL-CDS" id="CAA33095"/>
    </conflict>
</comment>
<dbReference type="EMBL" id="X14970">
    <property type="protein sequence ID" value="CAA33095.1"/>
    <property type="status" value="ALT_INIT"/>
    <property type="molecule type" value="mRNA"/>
</dbReference>
<dbReference type="EMBL" id="AAFI02000073">
    <property type="protein sequence ID" value="EAL64894.1"/>
    <property type="molecule type" value="Genomic_DNA"/>
</dbReference>
<dbReference type="PIR" id="S03886">
    <property type="entry name" value="FIDOA"/>
</dbReference>
<dbReference type="RefSeq" id="XP_639978.1">
    <property type="nucleotide sequence ID" value="XM_634886.1"/>
</dbReference>
<dbReference type="SMR" id="P13651"/>
<dbReference type="FunCoup" id="P13651">
    <property type="interactions" value="646"/>
</dbReference>
<dbReference type="STRING" id="44689.P13651"/>
<dbReference type="PaxDb" id="44689-DDB0191442"/>
<dbReference type="EnsemblProtists" id="EAL64894">
    <property type="protein sequence ID" value="EAL64894"/>
    <property type="gene ID" value="DDB_G0284861"/>
</dbReference>
<dbReference type="GeneID" id="8624890"/>
<dbReference type="KEGG" id="ddi:DDB_G0284861"/>
<dbReference type="dictyBase" id="DDB_G0284861">
    <property type="gene designation" value="eif5a"/>
</dbReference>
<dbReference type="VEuPathDB" id="AmoebaDB:DDB_G0284861"/>
<dbReference type="eggNOG" id="KOG3271">
    <property type="taxonomic scope" value="Eukaryota"/>
</dbReference>
<dbReference type="HOGENOM" id="CLU_102600_0_0_1"/>
<dbReference type="InParanoid" id="P13651"/>
<dbReference type="OMA" id="AKCHFTA"/>
<dbReference type="PhylomeDB" id="P13651"/>
<dbReference type="Reactome" id="R-DDI-204626">
    <property type="pathway name" value="Hypusine synthesis from eIF5A-lysine"/>
</dbReference>
<dbReference type="PRO" id="PR:P13651"/>
<dbReference type="Proteomes" id="UP000002195">
    <property type="component" value="Chromosome 4"/>
</dbReference>
<dbReference type="GO" id="GO:0045335">
    <property type="term" value="C:phagocytic vesicle"/>
    <property type="evidence" value="ECO:0007005"/>
    <property type="project" value="dictyBase"/>
</dbReference>
<dbReference type="GO" id="GO:0043022">
    <property type="term" value="F:ribosome binding"/>
    <property type="evidence" value="ECO:0007669"/>
    <property type="project" value="InterPro"/>
</dbReference>
<dbReference type="GO" id="GO:0003723">
    <property type="term" value="F:RNA binding"/>
    <property type="evidence" value="ECO:0007669"/>
    <property type="project" value="UniProtKB-KW"/>
</dbReference>
<dbReference type="GO" id="GO:0003746">
    <property type="term" value="F:translation elongation factor activity"/>
    <property type="evidence" value="ECO:0000318"/>
    <property type="project" value="GO_Central"/>
</dbReference>
<dbReference type="GO" id="GO:0045901">
    <property type="term" value="P:positive regulation of translational elongation"/>
    <property type="evidence" value="ECO:0007669"/>
    <property type="project" value="InterPro"/>
</dbReference>
<dbReference type="GO" id="GO:0045905">
    <property type="term" value="P:positive regulation of translational termination"/>
    <property type="evidence" value="ECO:0007669"/>
    <property type="project" value="InterPro"/>
</dbReference>
<dbReference type="GO" id="GO:0006414">
    <property type="term" value="P:translational elongation"/>
    <property type="evidence" value="ECO:0000318"/>
    <property type="project" value="GO_Central"/>
</dbReference>
<dbReference type="CDD" id="cd04468">
    <property type="entry name" value="S1_eIF5A"/>
    <property type="match status" value="1"/>
</dbReference>
<dbReference type="FunFam" id="2.30.30.30:FF:000007">
    <property type="entry name" value="Eukaryotic translation initiation factor 5A"/>
    <property type="match status" value="1"/>
</dbReference>
<dbReference type="FunFam" id="2.40.50.140:FF:000034">
    <property type="entry name" value="Eukaryotic translation initiation factor 5A"/>
    <property type="match status" value="1"/>
</dbReference>
<dbReference type="Gene3D" id="2.30.30.30">
    <property type="match status" value="1"/>
</dbReference>
<dbReference type="Gene3D" id="2.40.50.140">
    <property type="entry name" value="Nucleic acid-binding proteins"/>
    <property type="match status" value="1"/>
</dbReference>
<dbReference type="InterPro" id="IPR001884">
    <property type="entry name" value="IF5A-like"/>
</dbReference>
<dbReference type="InterPro" id="IPR048670">
    <property type="entry name" value="IF5A-like_N"/>
</dbReference>
<dbReference type="InterPro" id="IPR012340">
    <property type="entry name" value="NA-bd_OB-fold"/>
</dbReference>
<dbReference type="InterPro" id="IPR014722">
    <property type="entry name" value="Rib_uL2_dom2"/>
</dbReference>
<dbReference type="InterPro" id="IPR019769">
    <property type="entry name" value="Trans_elong_IF5A_hypusine_site"/>
</dbReference>
<dbReference type="InterPro" id="IPR020189">
    <property type="entry name" value="Transl_elong_IF5A_C"/>
</dbReference>
<dbReference type="InterPro" id="IPR008991">
    <property type="entry name" value="Translation_prot_SH3-like_sf"/>
</dbReference>
<dbReference type="NCBIfam" id="TIGR00037">
    <property type="entry name" value="eIF_5A"/>
    <property type="match status" value="1"/>
</dbReference>
<dbReference type="PANTHER" id="PTHR11673">
    <property type="entry name" value="TRANSLATION INITIATION FACTOR 5A FAMILY MEMBER"/>
    <property type="match status" value="1"/>
</dbReference>
<dbReference type="Pfam" id="PF01287">
    <property type="entry name" value="eIF-5a"/>
    <property type="match status" value="1"/>
</dbReference>
<dbReference type="Pfam" id="PF21485">
    <property type="entry name" value="IF5A-like_N"/>
    <property type="match status" value="1"/>
</dbReference>
<dbReference type="PIRSF" id="PIRSF003025">
    <property type="entry name" value="eIF5A"/>
    <property type="match status" value="1"/>
</dbReference>
<dbReference type="SMART" id="SM01376">
    <property type="entry name" value="eIF-5a"/>
    <property type="match status" value="1"/>
</dbReference>
<dbReference type="SUPFAM" id="SSF50249">
    <property type="entry name" value="Nucleic acid-binding proteins"/>
    <property type="match status" value="1"/>
</dbReference>
<dbReference type="SUPFAM" id="SSF50104">
    <property type="entry name" value="Translation proteins SH3-like domain"/>
    <property type="match status" value="1"/>
</dbReference>
<dbReference type="PROSITE" id="PS00302">
    <property type="entry name" value="IF5A_HYPUSINE"/>
    <property type="match status" value="1"/>
</dbReference>
<organism>
    <name type="scientific">Dictyostelium discoideum</name>
    <name type="common">Social amoeba</name>
    <dbReference type="NCBI Taxonomy" id="44689"/>
    <lineage>
        <taxon>Eukaryota</taxon>
        <taxon>Amoebozoa</taxon>
        <taxon>Evosea</taxon>
        <taxon>Eumycetozoa</taxon>
        <taxon>Dictyostelia</taxon>
        <taxon>Dictyosteliales</taxon>
        <taxon>Dictyosteliaceae</taxon>
        <taxon>Dictyostelium</taxon>
    </lineage>
</organism>
<keyword id="KW-0963">Cytoplasm</keyword>
<keyword id="KW-0903">Direct protein sequencing</keyword>
<keyword id="KW-0251">Elongation factor</keyword>
<keyword id="KW-0385">Hypusine</keyword>
<keyword id="KW-0648">Protein biosynthesis</keyword>
<keyword id="KW-1185">Reference proteome</keyword>
<keyword id="KW-0694">RNA-binding</keyword>